<keyword id="KW-0687">Ribonucleoprotein</keyword>
<keyword id="KW-0689">Ribosomal protein</keyword>
<keyword id="KW-0694">RNA-binding</keyword>
<keyword id="KW-0699">rRNA-binding</keyword>
<feature type="chain" id="PRO_1000196236" description="Large ribosomal subunit protein bL9">
    <location>
        <begin position="1"/>
        <end position="147"/>
    </location>
</feature>
<dbReference type="EMBL" id="AP009049">
    <property type="protein sequence ID" value="BAH08497.1"/>
    <property type="molecule type" value="Genomic_DNA"/>
</dbReference>
<dbReference type="RefSeq" id="WP_012104217.1">
    <property type="nucleotide sequence ID" value="NC_011837.1"/>
</dbReference>
<dbReference type="SMR" id="B9DXQ4"/>
<dbReference type="KEGG" id="ckr:CKR_3446"/>
<dbReference type="HOGENOM" id="CLU_078938_3_0_9"/>
<dbReference type="Proteomes" id="UP000007969">
    <property type="component" value="Chromosome"/>
</dbReference>
<dbReference type="GO" id="GO:1990904">
    <property type="term" value="C:ribonucleoprotein complex"/>
    <property type="evidence" value="ECO:0007669"/>
    <property type="project" value="UniProtKB-KW"/>
</dbReference>
<dbReference type="GO" id="GO:0005840">
    <property type="term" value="C:ribosome"/>
    <property type="evidence" value="ECO:0007669"/>
    <property type="project" value="UniProtKB-KW"/>
</dbReference>
<dbReference type="GO" id="GO:0019843">
    <property type="term" value="F:rRNA binding"/>
    <property type="evidence" value="ECO:0007669"/>
    <property type="project" value="UniProtKB-UniRule"/>
</dbReference>
<dbReference type="GO" id="GO:0003735">
    <property type="term" value="F:structural constituent of ribosome"/>
    <property type="evidence" value="ECO:0007669"/>
    <property type="project" value="InterPro"/>
</dbReference>
<dbReference type="GO" id="GO:0006412">
    <property type="term" value="P:translation"/>
    <property type="evidence" value="ECO:0007669"/>
    <property type="project" value="UniProtKB-UniRule"/>
</dbReference>
<dbReference type="FunFam" id="3.40.5.10:FF:000002">
    <property type="entry name" value="50S ribosomal protein L9"/>
    <property type="match status" value="1"/>
</dbReference>
<dbReference type="Gene3D" id="3.10.430.100">
    <property type="entry name" value="Ribosomal protein L9, C-terminal domain"/>
    <property type="match status" value="1"/>
</dbReference>
<dbReference type="Gene3D" id="3.40.5.10">
    <property type="entry name" value="Ribosomal protein L9, N-terminal domain"/>
    <property type="match status" value="1"/>
</dbReference>
<dbReference type="HAMAP" id="MF_00503">
    <property type="entry name" value="Ribosomal_bL9"/>
    <property type="match status" value="1"/>
</dbReference>
<dbReference type="InterPro" id="IPR000244">
    <property type="entry name" value="Ribosomal_bL9"/>
</dbReference>
<dbReference type="InterPro" id="IPR009027">
    <property type="entry name" value="Ribosomal_bL9/RNase_H1_N"/>
</dbReference>
<dbReference type="InterPro" id="IPR020594">
    <property type="entry name" value="Ribosomal_bL9_bac/chp"/>
</dbReference>
<dbReference type="InterPro" id="IPR020069">
    <property type="entry name" value="Ribosomal_bL9_C"/>
</dbReference>
<dbReference type="InterPro" id="IPR036791">
    <property type="entry name" value="Ribosomal_bL9_C_sf"/>
</dbReference>
<dbReference type="InterPro" id="IPR020070">
    <property type="entry name" value="Ribosomal_bL9_N"/>
</dbReference>
<dbReference type="InterPro" id="IPR036935">
    <property type="entry name" value="Ribosomal_bL9_N_sf"/>
</dbReference>
<dbReference type="NCBIfam" id="TIGR00158">
    <property type="entry name" value="L9"/>
    <property type="match status" value="1"/>
</dbReference>
<dbReference type="PANTHER" id="PTHR21368">
    <property type="entry name" value="50S RIBOSOMAL PROTEIN L9"/>
    <property type="match status" value="1"/>
</dbReference>
<dbReference type="Pfam" id="PF03948">
    <property type="entry name" value="Ribosomal_L9_C"/>
    <property type="match status" value="1"/>
</dbReference>
<dbReference type="Pfam" id="PF01281">
    <property type="entry name" value="Ribosomal_L9_N"/>
    <property type="match status" value="1"/>
</dbReference>
<dbReference type="SUPFAM" id="SSF55658">
    <property type="entry name" value="L9 N-domain-like"/>
    <property type="match status" value="1"/>
</dbReference>
<dbReference type="SUPFAM" id="SSF55653">
    <property type="entry name" value="Ribosomal protein L9 C-domain"/>
    <property type="match status" value="1"/>
</dbReference>
<dbReference type="PROSITE" id="PS00651">
    <property type="entry name" value="RIBOSOMAL_L9"/>
    <property type="match status" value="1"/>
</dbReference>
<accession>B9DXQ4</accession>
<sequence>MKVILLKDVKTLGKKGEVINASDGYARNYLIPKGFAEEANKTNLHIWNNKKEAERKQKLAEIEAAQKLAAELKGKEINLTVKSGENGRIFGSITGKDISDELNKKFKINIDKKKIVINNIRQLGTYDVEVKLYPEISTKIKVIIAEK</sequence>
<name>RL9_CLOK1</name>
<reference key="1">
    <citation type="submission" date="2005-09" db="EMBL/GenBank/DDBJ databases">
        <title>Complete genome sequence of Clostridium kluyveri and comparative genomics of Clostridia species.</title>
        <authorList>
            <person name="Inui M."/>
            <person name="Nonaka H."/>
            <person name="Shinoda Y."/>
            <person name="Ikenaga Y."/>
            <person name="Abe M."/>
            <person name="Naito K."/>
            <person name="Vertes A.A."/>
            <person name="Yukawa H."/>
        </authorList>
    </citation>
    <scope>NUCLEOTIDE SEQUENCE [LARGE SCALE GENOMIC DNA]</scope>
    <source>
        <strain>NBRC 12016</strain>
    </source>
</reference>
<evidence type="ECO:0000255" key="1">
    <source>
        <dbReference type="HAMAP-Rule" id="MF_00503"/>
    </source>
</evidence>
<evidence type="ECO:0000305" key="2"/>
<comment type="function">
    <text evidence="1">Binds to the 23S rRNA.</text>
</comment>
<comment type="similarity">
    <text evidence="1">Belongs to the bacterial ribosomal protein bL9 family.</text>
</comment>
<gene>
    <name evidence="1" type="primary">rplI</name>
    <name type="ordered locus">CKR_3446</name>
</gene>
<protein>
    <recommendedName>
        <fullName evidence="1">Large ribosomal subunit protein bL9</fullName>
    </recommendedName>
    <alternativeName>
        <fullName evidence="2">50S ribosomal protein L9</fullName>
    </alternativeName>
</protein>
<proteinExistence type="inferred from homology"/>
<organism>
    <name type="scientific">Clostridium kluyveri (strain NBRC 12016)</name>
    <dbReference type="NCBI Taxonomy" id="583346"/>
    <lineage>
        <taxon>Bacteria</taxon>
        <taxon>Bacillati</taxon>
        <taxon>Bacillota</taxon>
        <taxon>Clostridia</taxon>
        <taxon>Eubacteriales</taxon>
        <taxon>Clostridiaceae</taxon>
        <taxon>Clostridium</taxon>
    </lineage>
</organism>